<evidence type="ECO:0000255" key="1">
    <source>
        <dbReference type="HAMAP-Rule" id="MF_01451"/>
    </source>
</evidence>
<keyword id="KW-0067">ATP-binding</keyword>
<keyword id="KW-0227">DNA damage</keyword>
<keyword id="KW-0234">DNA repair</keyword>
<keyword id="KW-0238">DNA-binding</keyword>
<keyword id="KW-0269">Exonuclease</keyword>
<keyword id="KW-0347">Helicase</keyword>
<keyword id="KW-0378">Hydrolase</keyword>
<keyword id="KW-0413">Isomerase</keyword>
<keyword id="KW-0540">Nuclease</keyword>
<keyword id="KW-0547">Nucleotide-binding</keyword>
<name>ADDA_CLOPS</name>
<comment type="function">
    <text evidence="1">The heterodimer acts as both an ATP-dependent DNA helicase and an ATP-dependent, dual-direction single-stranded exonuclease. Recognizes the chi site generating a DNA molecule suitable for the initiation of homologous recombination. The AddA nuclease domain is required for chi fragment generation; this subunit has the helicase and 3' -&gt; 5' nuclease activities.</text>
</comment>
<comment type="catalytic activity">
    <reaction evidence="1">
        <text>Couples ATP hydrolysis with the unwinding of duplex DNA by translocating in the 3'-5' direction.</text>
        <dbReference type="EC" id="5.6.2.4"/>
    </reaction>
</comment>
<comment type="catalytic activity">
    <reaction evidence="1">
        <text>ATP + H2O = ADP + phosphate + H(+)</text>
        <dbReference type="Rhea" id="RHEA:13065"/>
        <dbReference type="ChEBI" id="CHEBI:15377"/>
        <dbReference type="ChEBI" id="CHEBI:15378"/>
        <dbReference type="ChEBI" id="CHEBI:30616"/>
        <dbReference type="ChEBI" id="CHEBI:43474"/>
        <dbReference type="ChEBI" id="CHEBI:456216"/>
        <dbReference type="EC" id="5.6.2.4"/>
    </reaction>
</comment>
<comment type="cofactor">
    <cofactor evidence="1">
        <name>Mg(2+)</name>
        <dbReference type="ChEBI" id="CHEBI:18420"/>
    </cofactor>
</comment>
<comment type="subunit">
    <text evidence="1">Heterodimer of AddA and AddB/RexB.</text>
</comment>
<comment type="similarity">
    <text evidence="1">Belongs to the helicase family. AddA subfamily.</text>
</comment>
<reference key="1">
    <citation type="journal article" date="2006" name="Genome Res.">
        <title>Skewed genomic variability in strains of the toxigenic bacterial pathogen, Clostridium perfringens.</title>
        <authorList>
            <person name="Myers G.S.A."/>
            <person name="Rasko D.A."/>
            <person name="Cheung J.K."/>
            <person name="Ravel J."/>
            <person name="Seshadri R."/>
            <person name="DeBoy R.T."/>
            <person name="Ren Q."/>
            <person name="Varga J."/>
            <person name="Awad M.M."/>
            <person name="Brinkac L.M."/>
            <person name="Daugherty S.C."/>
            <person name="Haft D.H."/>
            <person name="Dodson R.J."/>
            <person name="Madupu R."/>
            <person name="Nelson W.C."/>
            <person name="Rosovitz M.J."/>
            <person name="Sullivan S.A."/>
            <person name="Khouri H."/>
            <person name="Dimitrov G.I."/>
            <person name="Watkins K.L."/>
            <person name="Mulligan S."/>
            <person name="Benton J."/>
            <person name="Radune D."/>
            <person name="Fisher D.J."/>
            <person name="Atkins H.S."/>
            <person name="Hiscox T."/>
            <person name="Jost B.H."/>
            <person name="Billington S.J."/>
            <person name="Songer J.G."/>
            <person name="McClane B.A."/>
            <person name="Titball R.W."/>
            <person name="Rood J.I."/>
            <person name="Melville S.B."/>
            <person name="Paulsen I.T."/>
        </authorList>
    </citation>
    <scope>NUCLEOTIDE SEQUENCE [LARGE SCALE GENOMIC DNA]</scope>
    <source>
        <strain>SM101 / Type A</strain>
    </source>
</reference>
<proteinExistence type="inferred from homology"/>
<organism>
    <name type="scientific">Clostridium perfringens (strain SM101 / Type A)</name>
    <dbReference type="NCBI Taxonomy" id="289380"/>
    <lineage>
        <taxon>Bacteria</taxon>
        <taxon>Bacillati</taxon>
        <taxon>Bacillota</taxon>
        <taxon>Clostridia</taxon>
        <taxon>Eubacteriales</taxon>
        <taxon>Clostridiaceae</taxon>
        <taxon>Clostridium</taxon>
    </lineage>
</organism>
<gene>
    <name evidence="1" type="primary">addA</name>
    <name type="ordered locus">CPR_0025</name>
</gene>
<sequence length="1270" mass="147050">MGTKWTEEQELAINTRKCNLLVAAAAGSGKTAVLVERIIKMITEGENPVDIDKLLVVTFTNAAASEMRERIGDAISKALEKDPSSEVLQRQLALLNRASITTMHSFCLEVIKNNFHLIDLDPGFRIGDQTECELIKQDILADLFEDMYAKDDECFKDLVEAYGGSKSDDNLNSIILKFYNFIMSGPWPESWLKDKVEEFNINSIEELEGKKWIEVLKESIILDLNNAYSMLTQARDIAEMGGGLEPYLVNIYPEIIQVEELRIALSEGIVKFYNKLMGASFGRLKSVRKASVDDEKALEKTKSLRDESKKIIENLRDNVFETSLEEAVLGMKKMYPLMKCLSGLIIEFSNRYRDKKREKDILDFNDLEHLCLEILIDKDEEGNIKPSQVALEFKDKFEEVLVDEYQDSNTIQETIVGMVSRRDVENPNVFMVGDVKQSIYKFRQANPELFLEKYINYREFEDSNRKIMLYKNFRSREEIINGVNYIFKTLMSNTVGELEYDEKEALNLGASYGELNEENVEKEYIDEIENLKVAGDIELNILNKAGNKDYSDDELGEEEEDLDSIQLEARIIGKKINELMNPEDGSHYMVFDKDLGKYRKIKYKDIVILLRATKNWADTFVDELGTYGIPVYADTGTGYFQTIEIRTILALLHIIDNPMQDIYILSSLRSPIFSFTSEEFADLRLLNKDKYFFEIIKEVVDGIYDESISKDLKGKCKYFLDYLNKWREKAAYMPIDEFIWFLYSDTSYYGYVGTMPNGVQRQANLRILFQRAKQYESTSFKGLFNFINFINKLKKSSGDMGSAKILGENENVVRIMSIHKSKGLEFPVVILGGTGKQFNKMDLREDILLHETLGIGTNCIDVKKRIKYDTLQKHAIKKKCELEVLSEEMRILYVAFTRAKEKLIITGAVSDLEKSCENWCKASASSEDNRINPGNVLKGKSYLDWIGMALTKHKDGDAIRNVGNGDITLNLDDKSNWSFKSFDRSELLETNNNKKEKNNIDIFESNNWIESKKDIKEVIEIRNRLGFKYKYIESCNTPSNISVTELKRAHQEEEFMQESYNIIDNESSEENKKEKIKRKPRFMEERQEEFSAAKKGTITHFVMQHIDLDKVTYIDEIREEVLKMVKKELLTEEEGKVVNVFKIQKFFKSELGQRMLSSYKSGKKVYRELPFITEIPSSIIEKNLDPKIYGEEKVRLQGIIDAFFEEEDGYVLLDYKTDYVKEGEEEAFINKYKIQINLYKDTLNKILGEEVKEAYLYSFYLEKELKISKE</sequence>
<protein>
    <recommendedName>
        <fullName evidence="1">ATP-dependent helicase/nuclease subunit A</fullName>
        <ecNumber evidence="1">3.1.-.-</ecNumber>
        <ecNumber evidence="1">5.6.2.4</ecNumber>
    </recommendedName>
    <alternativeName>
        <fullName evidence="1">ATP-dependent helicase/nuclease AddA</fullName>
    </alternativeName>
    <alternativeName>
        <fullName evidence="1">DNA 3'-5' helicase AddA</fullName>
    </alternativeName>
</protein>
<accession>Q0SWW4</accession>
<dbReference type="EC" id="3.1.-.-" evidence="1"/>
<dbReference type="EC" id="5.6.2.4" evidence="1"/>
<dbReference type="EMBL" id="CP000312">
    <property type="protein sequence ID" value="ABG86634.1"/>
    <property type="molecule type" value="Genomic_DNA"/>
</dbReference>
<dbReference type="RefSeq" id="WP_011591208.1">
    <property type="nucleotide sequence ID" value="NC_008262.1"/>
</dbReference>
<dbReference type="SMR" id="Q0SWW4"/>
<dbReference type="KEGG" id="cpr:CPR_0025"/>
<dbReference type="Proteomes" id="UP000001824">
    <property type="component" value="Chromosome"/>
</dbReference>
<dbReference type="GO" id="GO:0005829">
    <property type="term" value="C:cytosol"/>
    <property type="evidence" value="ECO:0007669"/>
    <property type="project" value="TreeGrafter"/>
</dbReference>
<dbReference type="GO" id="GO:0033202">
    <property type="term" value="C:DNA helicase complex"/>
    <property type="evidence" value="ECO:0007669"/>
    <property type="project" value="TreeGrafter"/>
</dbReference>
<dbReference type="GO" id="GO:0043138">
    <property type="term" value="F:3'-5' DNA helicase activity"/>
    <property type="evidence" value="ECO:0007669"/>
    <property type="project" value="UniProtKB-UniRule"/>
</dbReference>
<dbReference type="GO" id="GO:0008408">
    <property type="term" value="F:3'-5' exonuclease activity"/>
    <property type="evidence" value="ECO:0007669"/>
    <property type="project" value="UniProtKB-UniRule"/>
</dbReference>
<dbReference type="GO" id="GO:0005524">
    <property type="term" value="F:ATP binding"/>
    <property type="evidence" value="ECO:0007669"/>
    <property type="project" value="UniProtKB-UniRule"/>
</dbReference>
<dbReference type="GO" id="GO:0016887">
    <property type="term" value="F:ATP hydrolysis activity"/>
    <property type="evidence" value="ECO:0007669"/>
    <property type="project" value="RHEA"/>
</dbReference>
<dbReference type="GO" id="GO:0003690">
    <property type="term" value="F:double-stranded DNA binding"/>
    <property type="evidence" value="ECO:0007669"/>
    <property type="project" value="UniProtKB-UniRule"/>
</dbReference>
<dbReference type="GO" id="GO:0000724">
    <property type="term" value="P:double-strand break repair via homologous recombination"/>
    <property type="evidence" value="ECO:0007669"/>
    <property type="project" value="UniProtKB-UniRule"/>
</dbReference>
<dbReference type="CDD" id="cd17932">
    <property type="entry name" value="DEXQc_UvrD"/>
    <property type="match status" value="1"/>
</dbReference>
<dbReference type="FunFam" id="3.40.50.300:FF:001236">
    <property type="entry name" value="ATP-dependent helicase/nuclease subunit A"/>
    <property type="match status" value="1"/>
</dbReference>
<dbReference type="Gene3D" id="1.10.274.50">
    <property type="match status" value="1"/>
</dbReference>
<dbReference type="Gene3D" id="3.90.320.10">
    <property type="match status" value="1"/>
</dbReference>
<dbReference type="Gene3D" id="3.40.50.300">
    <property type="entry name" value="P-loop containing nucleotide triphosphate hydrolases"/>
    <property type="match status" value="4"/>
</dbReference>
<dbReference type="HAMAP" id="MF_01451">
    <property type="entry name" value="AddA"/>
    <property type="match status" value="1"/>
</dbReference>
<dbReference type="InterPro" id="IPR014152">
    <property type="entry name" value="AddA"/>
</dbReference>
<dbReference type="InterPro" id="IPR014017">
    <property type="entry name" value="DNA_helicase_UvrD-like_C"/>
</dbReference>
<dbReference type="InterPro" id="IPR000212">
    <property type="entry name" value="DNA_helicase_UvrD/REP"/>
</dbReference>
<dbReference type="InterPro" id="IPR027417">
    <property type="entry name" value="P-loop_NTPase"/>
</dbReference>
<dbReference type="InterPro" id="IPR011604">
    <property type="entry name" value="PDDEXK-like_dom_sf"/>
</dbReference>
<dbReference type="InterPro" id="IPR038726">
    <property type="entry name" value="PDDEXK_AddAB-type"/>
</dbReference>
<dbReference type="InterPro" id="IPR011335">
    <property type="entry name" value="Restrct_endonuc-II-like"/>
</dbReference>
<dbReference type="InterPro" id="IPR014016">
    <property type="entry name" value="UvrD-like_ATP-bd"/>
</dbReference>
<dbReference type="NCBIfam" id="TIGR02785">
    <property type="entry name" value="addA_Gpos"/>
    <property type="match status" value="1"/>
</dbReference>
<dbReference type="PANTHER" id="PTHR11070:SF48">
    <property type="entry name" value="ATP-DEPENDENT HELICASE_NUCLEASE SUBUNIT A"/>
    <property type="match status" value="1"/>
</dbReference>
<dbReference type="PANTHER" id="PTHR11070">
    <property type="entry name" value="UVRD / RECB / PCRA DNA HELICASE FAMILY MEMBER"/>
    <property type="match status" value="1"/>
</dbReference>
<dbReference type="Pfam" id="PF12705">
    <property type="entry name" value="PDDEXK_1"/>
    <property type="match status" value="1"/>
</dbReference>
<dbReference type="Pfam" id="PF00580">
    <property type="entry name" value="UvrD-helicase"/>
    <property type="match status" value="1"/>
</dbReference>
<dbReference type="Pfam" id="PF13361">
    <property type="entry name" value="UvrD_C"/>
    <property type="match status" value="1"/>
</dbReference>
<dbReference type="SUPFAM" id="SSF52540">
    <property type="entry name" value="P-loop containing nucleoside triphosphate hydrolases"/>
    <property type="match status" value="1"/>
</dbReference>
<dbReference type="SUPFAM" id="SSF52980">
    <property type="entry name" value="Restriction endonuclease-like"/>
    <property type="match status" value="1"/>
</dbReference>
<dbReference type="PROSITE" id="PS51198">
    <property type="entry name" value="UVRD_HELICASE_ATP_BIND"/>
    <property type="match status" value="1"/>
</dbReference>
<dbReference type="PROSITE" id="PS51217">
    <property type="entry name" value="UVRD_HELICASE_CTER"/>
    <property type="match status" value="1"/>
</dbReference>
<feature type="chain" id="PRO_0000379263" description="ATP-dependent helicase/nuclease subunit A">
    <location>
        <begin position="1"/>
        <end position="1270"/>
    </location>
</feature>
<feature type="domain" description="UvrD-like helicase ATP-binding" evidence="1">
    <location>
        <begin position="3"/>
        <end position="476"/>
    </location>
</feature>
<feature type="domain" description="UvrD-like helicase C-terminal" evidence="1">
    <location>
        <begin position="528"/>
        <end position="823"/>
    </location>
</feature>
<feature type="binding site" evidence="1">
    <location>
        <begin position="24"/>
        <end position="31"/>
    </location>
    <ligand>
        <name>ATP</name>
        <dbReference type="ChEBI" id="CHEBI:30616"/>
    </ligand>
</feature>